<gene>
    <name type="primary">ycgV</name>
    <name type="ordered locus">b1202</name>
    <name type="ordered locus">JW1193</name>
</gene>
<feature type="chain" id="PRO_0000204729" description="Probable autotransporter YcgV">
    <location>
        <begin position="1"/>
        <end position="955"/>
    </location>
</feature>
<feature type="domain" description="Autotransporter" evidence="1">
    <location>
        <begin position="687"/>
        <end position="955"/>
    </location>
</feature>
<feature type="region of interest" description="Disordered" evidence="2">
    <location>
        <begin position="616"/>
        <end position="659"/>
    </location>
</feature>
<feature type="compositionally biased region" description="Pro residues" evidence="2">
    <location>
        <begin position="622"/>
        <end position="652"/>
    </location>
</feature>
<accession>P76017</accession>
<accession>Q9R7N1</accession>
<accession>Q9R7N2</accession>
<name>YCGV_ECOLI</name>
<organism>
    <name type="scientific">Escherichia coli (strain K12)</name>
    <dbReference type="NCBI Taxonomy" id="83333"/>
    <lineage>
        <taxon>Bacteria</taxon>
        <taxon>Pseudomonadati</taxon>
        <taxon>Pseudomonadota</taxon>
        <taxon>Gammaproteobacteria</taxon>
        <taxon>Enterobacterales</taxon>
        <taxon>Enterobacteriaceae</taxon>
        <taxon>Escherichia</taxon>
    </lineage>
</organism>
<comment type="function">
    <text evidence="3">Upon overexpression shows increased adherence to polyvinyl chloride (PVC) plates, increased mature biofilm formation (PubMed:15659678).</text>
</comment>
<comment type="disruption phenotype">
    <text evidence="3">No change in cell adhesion or biofilm formation (PubMed:15659678).</text>
</comment>
<evidence type="ECO:0000255" key="1">
    <source>
        <dbReference type="PROSITE-ProRule" id="PRU00556"/>
    </source>
</evidence>
<evidence type="ECO:0000256" key="2">
    <source>
        <dbReference type="SAM" id="MobiDB-lite"/>
    </source>
</evidence>
<evidence type="ECO:0000269" key="3">
    <source>
    </source>
</evidence>
<evidence type="ECO:0000305" key="4"/>
<dbReference type="EMBL" id="U00096">
    <property type="protein sequence ID" value="AAC74286.1"/>
    <property type="molecule type" value="Genomic_DNA"/>
</dbReference>
<dbReference type="EMBL" id="AP009048">
    <property type="protein sequence ID" value="BAA36059.2"/>
    <property type="molecule type" value="Genomic_DNA"/>
</dbReference>
<dbReference type="PIR" id="G64866">
    <property type="entry name" value="G64866"/>
</dbReference>
<dbReference type="RefSeq" id="NP_415720.1">
    <property type="nucleotide sequence ID" value="NC_000913.3"/>
</dbReference>
<dbReference type="RefSeq" id="WP_001334788.1">
    <property type="nucleotide sequence ID" value="NZ_SSZK01000010.1"/>
</dbReference>
<dbReference type="SMR" id="P76017"/>
<dbReference type="BioGRID" id="4260897">
    <property type="interactions" value="220"/>
</dbReference>
<dbReference type="FunCoup" id="P76017">
    <property type="interactions" value="15"/>
</dbReference>
<dbReference type="IntAct" id="P76017">
    <property type="interactions" value="2"/>
</dbReference>
<dbReference type="STRING" id="511145.b1202"/>
<dbReference type="TCDB" id="1.B.12.2.6">
    <property type="family name" value="the autotransporter-1 (at-1) family"/>
</dbReference>
<dbReference type="PaxDb" id="511145-b1202"/>
<dbReference type="EnsemblBacteria" id="AAC74286">
    <property type="protein sequence ID" value="AAC74286"/>
    <property type="gene ID" value="b1202"/>
</dbReference>
<dbReference type="GeneID" id="945767"/>
<dbReference type="KEGG" id="ecj:JW1193"/>
<dbReference type="KEGG" id="eco:b1202"/>
<dbReference type="KEGG" id="ecoc:C3026_07065"/>
<dbReference type="PATRIC" id="fig|1411691.4.peg.1083"/>
<dbReference type="EchoBASE" id="EB3662"/>
<dbReference type="eggNOG" id="COG3468">
    <property type="taxonomic scope" value="Bacteria"/>
</dbReference>
<dbReference type="HOGENOM" id="CLU_013182_0_0_6"/>
<dbReference type="InParanoid" id="P76017"/>
<dbReference type="OMA" id="NFEAGRF"/>
<dbReference type="OrthoDB" id="7052171at2"/>
<dbReference type="PhylomeDB" id="P76017"/>
<dbReference type="BioCyc" id="EcoCyc:G6629-MONOMER"/>
<dbReference type="PRO" id="PR:P76017"/>
<dbReference type="Proteomes" id="UP000000625">
    <property type="component" value="Chromosome"/>
</dbReference>
<dbReference type="GO" id="GO:0019867">
    <property type="term" value="C:outer membrane"/>
    <property type="evidence" value="ECO:0007669"/>
    <property type="project" value="InterPro"/>
</dbReference>
<dbReference type="GO" id="GO:0043708">
    <property type="term" value="P:cell adhesion involved in biofilm formation"/>
    <property type="evidence" value="ECO:0000315"/>
    <property type="project" value="EcoCyc"/>
</dbReference>
<dbReference type="CDD" id="cd01343">
    <property type="entry name" value="PL1_Passenger_AT"/>
    <property type="match status" value="1"/>
</dbReference>
<dbReference type="FunFam" id="2.40.128.130:FF:000002">
    <property type="entry name" value="Putative outer membrane autotransporter"/>
    <property type="match status" value="1"/>
</dbReference>
<dbReference type="Gene3D" id="2.160.20.20">
    <property type="match status" value="1"/>
</dbReference>
<dbReference type="Gene3D" id="2.40.128.130">
    <property type="entry name" value="Autotransporter beta-domain"/>
    <property type="match status" value="1"/>
</dbReference>
<dbReference type="InterPro" id="IPR005546">
    <property type="entry name" value="Autotransporte_beta"/>
</dbReference>
<dbReference type="InterPro" id="IPR036709">
    <property type="entry name" value="Autotransporte_beta_dom_sf"/>
</dbReference>
<dbReference type="InterPro" id="IPR012332">
    <property type="entry name" value="Autotransporter_pectin_lyase_C"/>
</dbReference>
<dbReference type="InterPro" id="IPR050909">
    <property type="entry name" value="Bact_Autotransporter_VF"/>
</dbReference>
<dbReference type="InterPro" id="IPR006315">
    <property type="entry name" value="OM_autotransptr_brl_dom"/>
</dbReference>
<dbReference type="InterPro" id="IPR011050">
    <property type="entry name" value="Pectin_lyase_fold/virulence"/>
</dbReference>
<dbReference type="InterPro" id="IPR004899">
    <property type="entry name" value="Pertactin_central"/>
</dbReference>
<dbReference type="InterPro" id="IPR003991">
    <property type="entry name" value="Pertactin_virulence_factor"/>
</dbReference>
<dbReference type="NCBIfam" id="TIGR01414">
    <property type="entry name" value="autotrans_barl"/>
    <property type="match status" value="1"/>
</dbReference>
<dbReference type="PANTHER" id="PTHR12338:SF5">
    <property type="entry name" value="ANTIGEN 43-RELATED"/>
    <property type="match status" value="1"/>
</dbReference>
<dbReference type="PANTHER" id="PTHR12338">
    <property type="entry name" value="AUTOTRANSPORTER"/>
    <property type="match status" value="1"/>
</dbReference>
<dbReference type="Pfam" id="PF03797">
    <property type="entry name" value="Autotransporter"/>
    <property type="match status" value="1"/>
</dbReference>
<dbReference type="Pfam" id="PF03212">
    <property type="entry name" value="Pertactin"/>
    <property type="match status" value="1"/>
</dbReference>
<dbReference type="PRINTS" id="PR01484">
    <property type="entry name" value="PRTACTNFAMLY"/>
</dbReference>
<dbReference type="SMART" id="SM00869">
    <property type="entry name" value="Autotransporter"/>
    <property type="match status" value="1"/>
</dbReference>
<dbReference type="SUPFAM" id="SSF103515">
    <property type="entry name" value="Autotransporter"/>
    <property type="match status" value="1"/>
</dbReference>
<dbReference type="SUPFAM" id="SSF51126">
    <property type="entry name" value="Pectin lyase-like"/>
    <property type="match status" value="1"/>
</dbReference>
<dbReference type="PROSITE" id="PS51208">
    <property type="entry name" value="AUTOTRANSPORTER"/>
    <property type="match status" value="1"/>
</dbReference>
<keyword id="KW-0130">Cell adhesion</keyword>
<keyword id="KW-1185">Reference proteome</keyword>
<sequence>MGIKQHNGNTKADRLAELKIRSPSIQLIKFGAIGLNAIIFSPLLIAADTGSQYGTNITINDGDRITGDTADPSGNLYGVMTPAGNTPGNINLGNDVTVNVNDASGYAKGIIIQGKNSSLTANRLTVDVVGQTSAIGINLIGDYTHADLGTGSTIKSNDDGIIIGHSSTLTATQFTIENSNGIGLTINDYGTSVDLGSGSKITTDGSTGVYIGGLNGNNANGAARFTATDLTIDVQGYSAMGINVQKNSVVDLGTNSTIKTNGDNAHGLWSFGQVSANALTVDVTGAAANGVEVRGGTTTIGADSHISSAQGGGLVTSGSDAIINFTGTAAQRNSIFSGGSYGASAQTATAVVNMQNTDITVDRNGSLALGLWALSGGRITGDSLAITGAAGARGIYAMTNSQIDLTSDLVIDMSTPDQMAIATQHDDGYAASRINASGRMLINGSVLSKGGLINLDMHPGSVWTGSSLSDNVNGGKLDVAMNNSVWNVTSNSNLDTLALSHSTVDFASHGSTAGTFATLNVENLSGNSTFIMRADVVGEGNGVNNKGDLLNISGSSAGNHVLAIRNQGSEATTGNEVLTVVKTTDGAASFSASSQVELGGYLYDVRKNGTNWELYASGTVPEPTPNPEPTPAPAQPPIVNPDPTPEPAPTPKPTTTADAGGNYLNVGYLLNYVENRTLMQRMGDLRNQSKDGNIWLRSYGGSLDSFASGKLSGFDMGYSGIQFGGDKRLSDVMPLYVGLYIGSTHASPDYSGGDGTARSDYMGMYASYMAQNGFYSDLVIKASRQKNSFHVLDSQNNGVNANGTANGMSISLEAGQRFNLSPTGYGFYIEPQTQLTYSHQNEMTMKASNGLNIHLNHYESLLGRASMILGYDITAGNSQLNVYVKTGAIREFSGDTEYLLNNSREKYSFKGNGWNNGVGVSAQYNKQHTFYLEADYTQGNLFDQKQVNGGYRFSF</sequence>
<reference key="1">
    <citation type="journal article" date="1997" name="Science">
        <title>The complete genome sequence of Escherichia coli K-12.</title>
        <authorList>
            <person name="Blattner F.R."/>
            <person name="Plunkett G. III"/>
            <person name="Bloch C.A."/>
            <person name="Perna N.T."/>
            <person name="Burland V."/>
            <person name="Riley M."/>
            <person name="Collado-Vides J."/>
            <person name="Glasner J.D."/>
            <person name="Rode C.K."/>
            <person name="Mayhew G.F."/>
            <person name="Gregor J."/>
            <person name="Davis N.W."/>
            <person name="Kirkpatrick H.A."/>
            <person name="Goeden M.A."/>
            <person name="Rose D.J."/>
            <person name="Mau B."/>
            <person name="Shao Y."/>
        </authorList>
    </citation>
    <scope>NUCLEOTIDE SEQUENCE [LARGE SCALE GENOMIC DNA]</scope>
    <source>
        <strain>K12 / MG1655 / ATCC 47076</strain>
    </source>
</reference>
<reference key="2">
    <citation type="journal article" date="2006" name="Mol. Syst. Biol.">
        <title>Highly accurate genome sequences of Escherichia coli K-12 strains MG1655 and W3110.</title>
        <authorList>
            <person name="Hayashi K."/>
            <person name="Morooka N."/>
            <person name="Yamamoto Y."/>
            <person name="Fujita K."/>
            <person name="Isono K."/>
            <person name="Choi S."/>
            <person name="Ohtsubo E."/>
            <person name="Baba T."/>
            <person name="Wanner B.L."/>
            <person name="Mori H."/>
            <person name="Horiuchi T."/>
        </authorList>
    </citation>
    <scope>NUCLEOTIDE SEQUENCE [LARGE SCALE GENOMIC DNA]</scope>
    <source>
        <strain>K12 / W3110 / ATCC 27325 / DSM 5911</strain>
    </source>
</reference>
<reference key="3">
    <citation type="journal article" date="1996" name="DNA Res.">
        <title>A 718-kb DNA sequence of the Escherichia coli K-12 genome corresponding to the 12.7-28.0 min region on the linkage map.</title>
        <authorList>
            <person name="Oshima T."/>
            <person name="Aiba H."/>
            <person name="Baba T."/>
            <person name="Fujita K."/>
            <person name="Hayashi K."/>
            <person name="Honjo A."/>
            <person name="Ikemoto K."/>
            <person name="Inada T."/>
            <person name="Itoh T."/>
            <person name="Kajihara M."/>
            <person name="Kanai K."/>
            <person name="Kashimoto K."/>
            <person name="Kimura S."/>
            <person name="Kitagawa M."/>
            <person name="Makino K."/>
            <person name="Masuda S."/>
            <person name="Miki T."/>
            <person name="Mizobuchi K."/>
            <person name="Mori H."/>
            <person name="Motomura K."/>
            <person name="Nakamura Y."/>
            <person name="Nashimoto H."/>
            <person name="Nishio Y."/>
            <person name="Saito N."/>
            <person name="Sampei G."/>
            <person name="Seki Y."/>
            <person name="Tagami H."/>
            <person name="Takemoto K."/>
            <person name="Wada C."/>
            <person name="Yamamoto Y."/>
            <person name="Yano M."/>
            <person name="Horiuchi T."/>
        </authorList>
    </citation>
    <scope>NUCLEOTIDE SEQUENCE [LARGE SCALE GENOMIC DNA] OF 1-71 AND 194-955</scope>
    <source>
        <strain>K12 / W3110 / ATCC 27325 / DSM 5911</strain>
    </source>
</reference>
<reference key="4">
    <citation type="journal article" date="2005" name="J. Bacteriol.">
        <title>Combined inactivation and expression strategy to study gene function under physiological conditions: application to identification of new Escherichia coli adhesins.</title>
        <authorList>
            <person name="Roux A."/>
            <person name="Beloin C."/>
            <person name="Ghigo J.M."/>
        </authorList>
    </citation>
    <scope>POSSIBLE FUNCTION IN ADHESION</scope>
    <scope>DISRUPTION PHENOTYPE</scope>
    <source>
        <strain>K12 / MG1655 / ATCC 47076</strain>
    </source>
</reference>
<proteinExistence type="evidence at protein level"/>
<protein>
    <recommendedName>
        <fullName evidence="4">Probable autotransporter YcgV</fullName>
    </recommendedName>
</protein>